<protein>
    <recommendedName>
        <fullName evidence="2">4-amino-5-hydroxymethyl-2-methylpyrimidine phosphate synthase</fullName>
        <shortName evidence="2">HMP-P synthase</shortName>
        <shortName evidence="2">Hydroxymethylpyrimidine phosphate synthase</shortName>
        <ecNumber evidence="2">2.-.-.-</ecNumber>
    </recommendedName>
    <alternativeName>
        <fullName evidence="7">No message in thiamine protein 1</fullName>
    </alternativeName>
    <alternativeName>
        <fullName evidence="6">Thiamine biosynthesis protein 3</fullName>
    </alternativeName>
    <alternativeName>
        <fullName evidence="1">Thiamine pyrimidine synthase</fullName>
    </alternativeName>
</protein>
<organism>
    <name type="scientific">Schizosaccharomyces pombe (strain 972 / ATCC 24843)</name>
    <name type="common">Fission yeast</name>
    <dbReference type="NCBI Taxonomy" id="284812"/>
    <lineage>
        <taxon>Eukaryota</taxon>
        <taxon>Fungi</taxon>
        <taxon>Dikarya</taxon>
        <taxon>Ascomycota</taxon>
        <taxon>Taphrinomycotina</taxon>
        <taxon>Schizosaccharomycetes</taxon>
        <taxon>Schizosaccharomycetales</taxon>
        <taxon>Schizosaccharomycetaceae</taxon>
        <taxon>Schizosaccharomyces</taxon>
    </lineage>
</organism>
<keyword id="KW-0963">Cytoplasm</keyword>
<keyword id="KW-0408">Iron</keyword>
<keyword id="KW-0479">Metal-binding</keyword>
<keyword id="KW-0539">Nucleus</keyword>
<keyword id="KW-0663">Pyridoxal phosphate</keyword>
<keyword id="KW-1185">Reference proteome</keyword>
<keyword id="KW-0784">Thiamine biosynthesis</keyword>
<keyword id="KW-0808">Transferase</keyword>
<reference key="1">
    <citation type="journal article" date="1990" name="J. Biol. Chem.">
        <title>nmt1 of fission yeast. A highly transcribed gene completely repressed by thiamine.</title>
        <authorList>
            <person name="Maundrell K."/>
        </authorList>
    </citation>
    <scope>NUCLEOTIDE SEQUENCE [GENOMIC DNA]</scope>
    <scope>INDUCTION</scope>
    <scope>DISRUPTION PHENOTYPE</scope>
    <scope>PATHWAY</scope>
    <source>
        <strain>972 / ATCC 24843</strain>
    </source>
</reference>
<reference key="2">
    <citation type="journal article" date="2002" name="Nature">
        <title>The genome sequence of Schizosaccharomyces pombe.</title>
        <authorList>
            <person name="Wood V."/>
            <person name="Gwilliam R."/>
            <person name="Rajandream M.A."/>
            <person name="Lyne M.H."/>
            <person name="Lyne R."/>
            <person name="Stewart A."/>
            <person name="Sgouros J.G."/>
            <person name="Peat N."/>
            <person name="Hayles J."/>
            <person name="Baker S.G."/>
            <person name="Basham D."/>
            <person name="Bowman S."/>
            <person name="Brooks K."/>
            <person name="Brown D."/>
            <person name="Brown S."/>
            <person name="Chillingworth T."/>
            <person name="Churcher C.M."/>
            <person name="Collins M."/>
            <person name="Connor R."/>
            <person name="Cronin A."/>
            <person name="Davis P."/>
            <person name="Feltwell T."/>
            <person name="Fraser A."/>
            <person name="Gentles S."/>
            <person name="Goble A."/>
            <person name="Hamlin N."/>
            <person name="Harris D.E."/>
            <person name="Hidalgo J."/>
            <person name="Hodgson G."/>
            <person name="Holroyd S."/>
            <person name="Hornsby T."/>
            <person name="Howarth S."/>
            <person name="Huckle E.J."/>
            <person name="Hunt S."/>
            <person name="Jagels K."/>
            <person name="James K.D."/>
            <person name="Jones L."/>
            <person name="Jones M."/>
            <person name="Leather S."/>
            <person name="McDonald S."/>
            <person name="McLean J."/>
            <person name="Mooney P."/>
            <person name="Moule S."/>
            <person name="Mungall K.L."/>
            <person name="Murphy L.D."/>
            <person name="Niblett D."/>
            <person name="Odell C."/>
            <person name="Oliver K."/>
            <person name="O'Neil S."/>
            <person name="Pearson D."/>
            <person name="Quail M.A."/>
            <person name="Rabbinowitsch E."/>
            <person name="Rutherford K.M."/>
            <person name="Rutter S."/>
            <person name="Saunders D."/>
            <person name="Seeger K."/>
            <person name="Sharp S."/>
            <person name="Skelton J."/>
            <person name="Simmonds M.N."/>
            <person name="Squares R."/>
            <person name="Squares S."/>
            <person name="Stevens K."/>
            <person name="Taylor K."/>
            <person name="Taylor R.G."/>
            <person name="Tivey A."/>
            <person name="Walsh S.V."/>
            <person name="Warren T."/>
            <person name="Whitehead S."/>
            <person name="Woodward J.R."/>
            <person name="Volckaert G."/>
            <person name="Aert R."/>
            <person name="Robben J."/>
            <person name="Grymonprez B."/>
            <person name="Weltjens I."/>
            <person name="Vanstreels E."/>
            <person name="Rieger M."/>
            <person name="Schaefer M."/>
            <person name="Mueller-Auer S."/>
            <person name="Gabel C."/>
            <person name="Fuchs M."/>
            <person name="Duesterhoeft A."/>
            <person name="Fritzc C."/>
            <person name="Holzer E."/>
            <person name="Moestl D."/>
            <person name="Hilbert H."/>
            <person name="Borzym K."/>
            <person name="Langer I."/>
            <person name="Beck A."/>
            <person name="Lehrach H."/>
            <person name="Reinhardt R."/>
            <person name="Pohl T.M."/>
            <person name="Eger P."/>
            <person name="Zimmermann W."/>
            <person name="Wedler H."/>
            <person name="Wambutt R."/>
            <person name="Purnelle B."/>
            <person name="Goffeau A."/>
            <person name="Cadieu E."/>
            <person name="Dreano S."/>
            <person name="Gloux S."/>
            <person name="Lelaure V."/>
            <person name="Mottier S."/>
            <person name="Galibert F."/>
            <person name="Aves S.J."/>
            <person name="Xiang Z."/>
            <person name="Hunt C."/>
            <person name="Moore K."/>
            <person name="Hurst S.M."/>
            <person name="Lucas M."/>
            <person name="Rochet M."/>
            <person name="Gaillardin C."/>
            <person name="Tallada V.A."/>
            <person name="Garzon A."/>
            <person name="Thode G."/>
            <person name="Daga R.R."/>
            <person name="Cruzado L."/>
            <person name="Jimenez J."/>
            <person name="Sanchez M."/>
            <person name="del Rey F."/>
            <person name="Benito J."/>
            <person name="Dominguez A."/>
            <person name="Revuelta J.L."/>
            <person name="Moreno S."/>
            <person name="Armstrong J."/>
            <person name="Forsburg S.L."/>
            <person name="Cerutti L."/>
            <person name="Lowe T."/>
            <person name="McCombie W.R."/>
            <person name="Paulsen I."/>
            <person name="Potashkin J."/>
            <person name="Shpakovski G.V."/>
            <person name="Ussery D."/>
            <person name="Barrell B.G."/>
            <person name="Nurse P."/>
        </authorList>
    </citation>
    <scope>NUCLEOTIDE SEQUENCE [LARGE SCALE GENOMIC DNA]</scope>
    <source>
        <strain>972 / ATCC 24843</strain>
    </source>
</reference>
<reference key="3">
    <citation type="journal article" date="1991" name="Curr. Genet.">
        <title>Thiamine in Schizosaccharomyces pombe: dephosphorylation, intracellular pool, biosynthesis and transport.</title>
        <authorList>
            <person name="Schweingruber A.M."/>
            <person name="Dlugonski J."/>
            <person name="Edenharter E."/>
            <person name="Schweingruber M.E."/>
        </authorList>
    </citation>
    <scope>GENE NAME</scope>
</reference>
<reference key="4">
    <citation type="journal article" date="1991" name="Curr. Genet.">
        <title>Uptake of thiamine by Schizosaccharomyces pombe and its effect as a transcriptional regulator of thiamine-sensitive genes.</title>
        <authorList>
            <person name="Tommasino M."/>
            <person name="Maundrell K."/>
        </authorList>
    </citation>
    <scope>INDUCTION</scope>
</reference>
<reference key="5">
    <citation type="journal article" date="2006" name="Nat. Biotechnol.">
        <title>ORFeome cloning and global analysis of protein localization in the fission yeast Schizosaccharomyces pombe.</title>
        <authorList>
            <person name="Matsuyama A."/>
            <person name="Arai R."/>
            <person name="Yashiroda Y."/>
            <person name="Shirai A."/>
            <person name="Kamata A."/>
            <person name="Sekido S."/>
            <person name="Kobayashi Y."/>
            <person name="Hashimoto A."/>
            <person name="Hamamoto M."/>
            <person name="Hiraoka Y."/>
            <person name="Horinouchi S."/>
            <person name="Yoshida M."/>
        </authorList>
    </citation>
    <scope>SUBCELLULAR LOCATION [LARGE SCALE ANALYSIS]</scope>
</reference>
<evidence type="ECO:0000250" key="1">
    <source>
        <dbReference type="UniProtKB" id="C4YMW2"/>
    </source>
</evidence>
<evidence type="ECO:0000250" key="2">
    <source>
        <dbReference type="UniProtKB" id="P43534"/>
    </source>
</evidence>
<evidence type="ECO:0000269" key="3">
    <source>
    </source>
</evidence>
<evidence type="ECO:0000269" key="4">
    <source>
    </source>
</evidence>
<evidence type="ECO:0000269" key="5">
    <source>
    </source>
</evidence>
<evidence type="ECO:0000303" key="6">
    <source>
    </source>
</evidence>
<evidence type="ECO:0000303" key="7">
    <source>
    </source>
</evidence>
<evidence type="ECO:0000305" key="8"/>
<evidence type="ECO:0000305" key="9">
    <source>
    </source>
</evidence>
<evidence type="ECO:0000312" key="10">
    <source>
        <dbReference type="PomBase" id="SPCC1223.02"/>
    </source>
</evidence>
<name>NMT1_SCHPO</name>
<feature type="chain" id="PRO_0000211624" description="4-amino-5-hydroxymethyl-2-methylpyrimidine phosphate synthase">
    <location>
        <begin position="1"/>
        <end position="346"/>
    </location>
</feature>
<feature type="short sequence motif" description="CCCFC; essential for catalytic activity, may be the site of iron coordination" evidence="2">
    <location>
        <begin position="194"/>
        <end position="198"/>
    </location>
</feature>
<feature type="active site" evidence="2">
    <location>
        <position position="66"/>
    </location>
</feature>
<feature type="binding site" evidence="2">
    <location>
        <begin position="114"/>
        <end position="117"/>
    </location>
    <ligand>
        <name>pyridoxal 5'-phosphate</name>
        <dbReference type="ChEBI" id="CHEBI:597326"/>
    </ligand>
</feature>
<feature type="modified residue" description="N6-(pyridoxal phosphate)lysine" evidence="2">
    <location>
        <position position="62"/>
    </location>
</feature>
<dbReference type="EC" id="2.-.-.-" evidence="2"/>
<dbReference type="EMBL" id="J05493">
    <property type="protein sequence ID" value="AAA35318.1"/>
    <property type="molecule type" value="Genomic_DNA"/>
</dbReference>
<dbReference type="EMBL" id="CU329672">
    <property type="protein sequence ID" value="CAA20871.1"/>
    <property type="molecule type" value="Genomic_DNA"/>
</dbReference>
<dbReference type="PIR" id="A42223">
    <property type="entry name" value="A42223"/>
</dbReference>
<dbReference type="RefSeq" id="NP_588347.1">
    <property type="nucleotide sequence ID" value="NM_001023338.2"/>
</dbReference>
<dbReference type="SMR" id="P36597"/>
<dbReference type="BioGRID" id="275680">
    <property type="interactions" value="19"/>
</dbReference>
<dbReference type="FunCoup" id="P36597">
    <property type="interactions" value="105"/>
</dbReference>
<dbReference type="STRING" id="284812.P36597"/>
<dbReference type="iPTMnet" id="P36597"/>
<dbReference type="PaxDb" id="4896-SPCC1223.02.1"/>
<dbReference type="EnsemblFungi" id="SPCC1223.02.1">
    <property type="protein sequence ID" value="SPCC1223.02.1:pep"/>
    <property type="gene ID" value="SPCC1223.02"/>
</dbReference>
<dbReference type="GeneID" id="2539108"/>
<dbReference type="KEGG" id="spo:2539108"/>
<dbReference type="PomBase" id="SPCC1223.02">
    <property type="gene designation" value="nmt1"/>
</dbReference>
<dbReference type="VEuPathDB" id="FungiDB:SPCC1223.02"/>
<dbReference type="eggNOG" id="ENOG502QQ87">
    <property type="taxonomic scope" value="Eukaryota"/>
</dbReference>
<dbReference type="HOGENOM" id="CLU_028871_6_3_1"/>
<dbReference type="InParanoid" id="P36597"/>
<dbReference type="OMA" id="TKHYGMT"/>
<dbReference type="PhylomeDB" id="P36597"/>
<dbReference type="UniPathway" id="UPA00060"/>
<dbReference type="PRO" id="PR:P36597"/>
<dbReference type="Proteomes" id="UP000002485">
    <property type="component" value="Chromosome III"/>
</dbReference>
<dbReference type="GO" id="GO:0005829">
    <property type="term" value="C:cytosol"/>
    <property type="evidence" value="ECO:0007005"/>
    <property type="project" value="PomBase"/>
</dbReference>
<dbReference type="GO" id="GO:0005634">
    <property type="term" value="C:nucleus"/>
    <property type="evidence" value="ECO:0007005"/>
    <property type="project" value="PomBase"/>
</dbReference>
<dbReference type="GO" id="GO:0106344">
    <property type="term" value="F:4-amino-5-hydroxymethyl-2-methylpyrimidine phosphate synthase activity from histidine and PLP"/>
    <property type="evidence" value="ECO:0000250"/>
    <property type="project" value="UniProtKB"/>
</dbReference>
<dbReference type="GO" id="GO:0046872">
    <property type="term" value="F:metal ion binding"/>
    <property type="evidence" value="ECO:0007669"/>
    <property type="project" value="UniProtKB-KW"/>
</dbReference>
<dbReference type="GO" id="GO:0009228">
    <property type="term" value="P:thiamine biosynthetic process"/>
    <property type="evidence" value="ECO:0000315"/>
    <property type="project" value="PomBase"/>
</dbReference>
<dbReference type="GO" id="GO:0009229">
    <property type="term" value="P:thiamine diphosphate biosynthetic process"/>
    <property type="evidence" value="ECO:0007669"/>
    <property type="project" value="UniProtKB-UniPathway"/>
</dbReference>
<dbReference type="CDD" id="cd13650">
    <property type="entry name" value="PBP2_THI5"/>
    <property type="match status" value="1"/>
</dbReference>
<dbReference type="FunFam" id="3.40.190.10:FF:000187">
    <property type="entry name" value="4-amino-5-hydroxymethyl-2-methylpyrimidine phosphate synthase THI5"/>
    <property type="match status" value="1"/>
</dbReference>
<dbReference type="Gene3D" id="3.40.190.10">
    <property type="entry name" value="Periplasmic binding protein-like II"/>
    <property type="match status" value="2"/>
</dbReference>
<dbReference type="InterPro" id="IPR027939">
    <property type="entry name" value="NMT1/THI5"/>
</dbReference>
<dbReference type="InterPro" id="IPR015168">
    <property type="entry name" value="SsuA/THI5"/>
</dbReference>
<dbReference type="PANTHER" id="PTHR31528">
    <property type="entry name" value="4-AMINO-5-HYDROXYMETHYL-2-METHYLPYRIMIDINE PHOSPHATE SYNTHASE THI11-RELATED"/>
    <property type="match status" value="1"/>
</dbReference>
<dbReference type="PANTHER" id="PTHR31528:SF1">
    <property type="entry name" value="4-AMINO-5-HYDROXYMETHYL-2-METHYLPYRIMIDINE PHOSPHATE SYNTHASE THI11-RELATED"/>
    <property type="match status" value="1"/>
</dbReference>
<dbReference type="Pfam" id="PF09084">
    <property type="entry name" value="NMT1"/>
    <property type="match status" value="1"/>
</dbReference>
<dbReference type="SUPFAM" id="SSF53850">
    <property type="entry name" value="Periplasmic binding protein-like II"/>
    <property type="match status" value="1"/>
</dbReference>
<proteinExistence type="evidence at transcript level"/>
<sequence>MSTNKITFLTNWEATPYHLPIFLAQTRGYYEREGIEVAILEPTNPSDVTALIGSGKVDMGLKAMIHTLAAKARGYPVTSFGSLLNEPFTGLITLKGNGINDFKDIKGKRIGYVGEFGKIQLDDLCSKFGLSPSDYTAIRCGMNIAPAIINGEIDGGIGIECMQQVELERWCVSQGRPRSDVQMLRIDRLANLGCCCFCTILYIAHDEFIAKHPDKIKAFLRAIHSATLDMLKDPVQTYKEYIHFKREMGSELHREQFERCFAYFSHDISNVPRDWNKVTNYSKRLGIIPQDFEPNCTNGYLTWELDPDEKDPMGKQEAIAEIQDEIKQKGGVFSGNSLRYVEPANL</sequence>
<gene>
    <name evidence="7" type="primary">nmt1</name>
    <name evidence="6" type="synonym">thi3</name>
    <name evidence="10" type="ORF">SPCC1223.02</name>
</gene>
<comment type="function">
    <text evidence="2">Responsible for the formation of the pyrimidine heterocycle in the thiamine biosynthesis pathway. Catalyzes the formation of hydroxymethylpyrimidine phosphate (HMP-P) from histidine and pyridoxal phosphate (PLP). The protein uses PLP and the active site histidine to form HMP-P, generating an inactive enzyme. The enzyme can only undergo a single turnover, which suggests it is a suicide enzyme.</text>
</comment>
<comment type="catalytic activity">
    <reaction evidence="2">
        <text>N(6)-(pyridoxal phosphate)-L-lysyl-[4-amino-5-hydroxymethyl-2-methylpyrimidine phosphate synthase] + L-histidyl-[4-amino-5-hydroxymethyl-2-methylpyrimidine phosphate synthase] + 2 Fe(3+) + 4 H2O = L-lysyl-[4-amino-5-hydroxymethyl-2-methylpyrimidine phosphate synthase] + (2S)-2-amino-5-hydroxy-4-oxopentanoyl-[4-amino-5-hydroxymethyl-2-methylpyrimidine phosphate synthase] + 4-amino-2-methyl-5-(phosphooxymethyl)pyrimidine + 3-oxopropanoate + 2 Fe(2+) + 2 H(+)</text>
        <dbReference type="Rhea" id="RHEA:65756"/>
        <dbReference type="Rhea" id="RHEA-COMP:16892"/>
        <dbReference type="Rhea" id="RHEA-COMP:16893"/>
        <dbReference type="Rhea" id="RHEA-COMP:16894"/>
        <dbReference type="Rhea" id="RHEA-COMP:16895"/>
        <dbReference type="ChEBI" id="CHEBI:15377"/>
        <dbReference type="ChEBI" id="CHEBI:15378"/>
        <dbReference type="ChEBI" id="CHEBI:29033"/>
        <dbReference type="ChEBI" id="CHEBI:29034"/>
        <dbReference type="ChEBI" id="CHEBI:29969"/>
        <dbReference type="ChEBI" id="CHEBI:29979"/>
        <dbReference type="ChEBI" id="CHEBI:33190"/>
        <dbReference type="ChEBI" id="CHEBI:58354"/>
        <dbReference type="ChEBI" id="CHEBI:143915"/>
        <dbReference type="ChEBI" id="CHEBI:157692"/>
    </reaction>
    <physiologicalReaction direction="left-to-right" evidence="2">
        <dbReference type="Rhea" id="RHEA:65757"/>
    </physiologicalReaction>
</comment>
<comment type="cofactor">
    <cofactor evidence="2">
        <name>Fe cation</name>
        <dbReference type="ChEBI" id="CHEBI:24875"/>
    </cofactor>
</comment>
<comment type="pathway">
    <text evidence="9">Cofactor biosynthesis; thiamine diphosphate biosynthesis.</text>
</comment>
<comment type="subunit">
    <text evidence="2">Homodimer.</text>
</comment>
<comment type="subcellular location">
    <subcellularLocation>
        <location evidence="3">Cytoplasm</location>
    </subcellularLocation>
    <subcellularLocation>
        <location evidence="3">Nucleus</location>
    </subcellularLocation>
</comment>
<comment type="induction">
    <text evidence="4 5">Repressed by thiamine.</text>
</comment>
<comment type="disruption phenotype">
    <text evidence="5">Auxotroph for thiamine.</text>
</comment>
<comment type="similarity">
    <text evidence="8">Belongs to the NMT1/THI5 family.</text>
</comment>
<accession>P36597</accession>